<accession>B5Z6D2</accession>
<dbReference type="EMBL" id="CP001173">
    <property type="protein sequence ID" value="ACI26786.1"/>
    <property type="molecule type" value="Genomic_DNA"/>
</dbReference>
<dbReference type="RefSeq" id="WP_000671949.1">
    <property type="nucleotide sequence ID" value="NC_011333.1"/>
</dbReference>
<dbReference type="SMR" id="B5Z6D2"/>
<dbReference type="GeneID" id="93237476"/>
<dbReference type="KEGG" id="hpg:HPG27_10"/>
<dbReference type="HOGENOM" id="CLU_132825_2_0_7"/>
<dbReference type="Proteomes" id="UP000001735">
    <property type="component" value="Chromosome"/>
</dbReference>
<dbReference type="GO" id="GO:0005737">
    <property type="term" value="C:cytoplasm"/>
    <property type="evidence" value="ECO:0007669"/>
    <property type="project" value="UniProtKB-SubCell"/>
</dbReference>
<dbReference type="GO" id="GO:0005524">
    <property type="term" value="F:ATP binding"/>
    <property type="evidence" value="ECO:0007669"/>
    <property type="project" value="InterPro"/>
</dbReference>
<dbReference type="GO" id="GO:0046872">
    <property type="term" value="F:metal ion binding"/>
    <property type="evidence" value="ECO:0007669"/>
    <property type="project" value="TreeGrafter"/>
</dbReference>
<dbReference type="GO" id="GO:0044183">
    <property type="term" value="F:protein folding chaperone"/>
    <property type="evidence" value="ECO:0007669"/>
    <property type="project" value="InterPro"/>
</dbReference>
<dbReference type="GO" id="GO:0051087">
    <property type="term" value="F:protein-folding chaperone binding"/>
    <property type="evidence" value="ECO:0007669"/>
    <property type="project" value="TreeGrafter"/>
</dbReference>
<dbReference type="GO" id="GO:0051082">
    <property type="term" value="F:unfolded protein binding"/>
    <property type="evidence" value="ECO:0007669"/>
    <property type="project" value="TreeGrafter"/>
</dbReference>
<dbReference type="GO" id="GO:0051085">
    <property type="term" value="P:chaperone cofactor-dependent protein refolding"/>
    <property type="evidence" value="ECO:0007669"/>
    <property type="project" value="TreeGrafter"/>
</dbReference>
<dbReference type="CDD" id="cd00320">
    <property type="entry name" value="cpn10"/>
    <property type="match status" value="1"/>
</dbReference>
<dbReference type="FunFam" id="2.30.33.40:FF:000009">
    <property type="entry name" value="10 kDa chaperonin"/>
    <property type="match status" value="1"/>
</dbReference>
<dbReference type="Gene3D" id="2.30.33.40">
    <property type="entry name" value="GroES chaperonin"/>
    <property type="match status" value="1"/>
</dbReference>
<dbReference type="HAMAP" id="MF_00580">
    <property type="entry name" value="CH10"/>
    <property type="match status" value="1"/>
</dbReference>
<dbReference type="InterPro" id="IPR020818">
    <property type="entry name" value="Chaperonin_GroES"/>
</dbReference>
<dbReference type="InterPro" id="IPR037124">
    <property type="entry name" value="Chaperonin_GroES_sf"/>
</dbReference>
<dbReference type="InterPro" id="IPR018369">
    <property type="entry name" value="Chaprnonin_Cpn10_CS"/>
</dbReference>
<dbReference type="InterPro" id="IPR011032">
    <property type="entry name" value="GroES-like_sf"/>
</dbReference>
<dbReference type="NCBIfam" id="NF001535">
    <property type="entry name" value="PRK00364.3-1"/>
    <property type="match status" value="1"/>
</dbReference>
<dbReference type="NCBIfam" id="NF001537">
    <property type="entry name" value="PRK00364.3-3"/>
    <property type="match status" value="1"/>
</dbReference>
<dbReference type="PANTHER" id="PTHR10772">
    <property type="entry name" value="10 KDA HEAT SHOCK PROTEIN"/>
    <property type="match status" value="1"/>
</dbReference>
<dbReference type="PANTHER" id="PTHR10772:SF58">
    <property type="entry name" value="CO-CHAPERONIN GROES"/>
    <property type="match status" value="1"/>
</dbReference>
<dbReference type="Pfam" id="PF00166">
    <property type="entry name" value="Cpn10"/>
    <property type="match status" value="1"/>
</dbReference>
<dbReference type="PRINTS" id="PR00297">
    <property type="entry name" value="CHAPERONIN10"/>
</dbReference>
<dbReference type="SMART" id="SM00883">
    <property type="entry name" value="Cpn10"/>
    <property type="match status" value="1"/>
</dbReference>
<dbReference type="SUPFAM" id="SSF50129">
    <property type="entry name" value="GroES-like"/>
    <property type="match status" value="1"/>
</dbReference>
<dbReference type="PROSITE" id="PS00681">
    <property type="entry name" value="CHAPERONINS_CPN10"/>
    <property type="match status" value="1"/>
</dbReference>
<reference key="1">
    <citation type="journal article" date="2009" name="J. Bacteriol.">
        <title>The complete genome sequence of Helicobacter pylori strain G27.</title>
        <authorList>
            <person name="Baltrus D.A."/>
            <person name="Amieva M.R."/>
            <person name="Covacci A."/>
            <person name="Lowe T.M."/>
            <person name="Merrell D.S."/>
            <person name="Ottemann K.M."/>
            <person name="Stein M."/>
            <person name="Salama N.R."/>
            <person name="Guillemin K."/>
        </authorList>
    </citation>
    <scope>NUCLEOTIDE SEQUENCE [LARGE SCALE GENOMIC DNA]</scope>
    <source>
        <strain>G27</strain>
    </source>
</reference>
<evidence type="ECO:0000255" key="1">
    <source>
        <dbReference type="HAMAP-Rule" id="MF_00580"/>
    </source>
</evidence>
<feature type="chain" id="PRO_1000129669" description="Co-chaperonin GroES">
    <location>
        <begin position="1"/>
        <end position="118"/>
    </location>
</feature>
<sequence>MKFQPLGERVLVERLEEENKTSSGIIIPDNAKEKPLMGVVKAVSHKISEGCKCVKEGDVIAFGKYKGAEIVLDGVEYMVLELEDILGIVGSGSCCHTGNHDHKHAKEHEACCHDHKKH</sequence>
<comment type="function">
    <text evidence="1">Together with the chaperonin GroEL, plays an essential role in assisting protein folding. The GroEL-GroES system forms a nano-cage that allows encapsulation of the non-native substrate proteins and provides a physical environment optimized to promote and accelerate protein folding. GroES binds to the apical surface of the GroEL ring, thereby capping the opening of the GroEL channel.</text>
</comment>
<comment type="subunit">
    <text evidence="1">Heptamer of 7 subunits arranged in a ring. Interacts with the chaperonin GroEL.</text>
</comment>
<comment type="subcellular location">
    <subcellularLocation>
        <location evidence="1">Cytoplasm</location>
    </subcellularLocation>
</comment>
<comment type="similarity">
    <text evidence="1">Belongs to the GroES chaperonin family.</text>
</comment>
<gene>
    <name evidence="1" type="primary">groES</name>
    <name evidence="1" type="synonym">groS</name>
    <name type="ordered locus">HPG27_10</name>
</gene>
<protein>
    <recommendedName>
        <fullName evidence="1">Co-chaperonin GroES</fullName>
    </recommendedName>
    <alternativeName>
        <fullName evidence="1">10 kDa chaperonin</fullName>
    </alternativeName>
    <alternativeName>
        <fullName evidence="1">Chaperonin-10</fullName>
        <shortName evidence="1">Cpn10</shortName>
    </alternativeName>
</protein>
<keyword id="KW-0143">Chaperone</keyword>
<keyword id="KW-0963">Cytoplasm</keyword>
<keyword id="KW-1185">Reference proteome</keyword>
<name>CH10_HELPG</name>
<proteinExistence type="inferred from homology"/>
<organism>
    <name type="scientific">Helicobacter pylori (strain G27)</name>
    <dbReference type="NCBI Taxonomy" id="563041"/>
    <lineage>
        <taxon>Bacteria</taxon>
        <taxon>Pseudomonadati</taxon>
        <taxon>Campylobacterota</taxon>
        <taxon>Epsilonproteobacteria</taxon>
        <taxon>Campylobacterales</taxon>
        <taxon>Helicobacteraceae</taxon>
        <taxon>Helicobacter</taxon>
    </lineage>
</organism>